<protein>
    <recommendedName>
        <fullName>Protein YdgA</fullName>
    </recommendedName>
</protein>
<evidence type="ECO:0000255" key="1"/>
<evidence type="ECO:0000269" key="2">
    <source>
    </source>
</evidence>
<evidence type="ECO:0000305" key="3"/>
<keyword id="KW-0997">Cell inner membrane</keyword>
<keyword id="KW-1003">Cell membrane</keyword>
<keyword id="KW-0472">Membrane</keyword>
<keyword id="KW-1185">Reference proteome</keyword>
<keyword id="KW-0732">Signal</keyword>
<gene>
    <name type="primary">ydgA</name>
    <name type="ordered locus">b1614</name>
    <name type="ordered locus">JW1606</name>
</gene>
<proteinExistence type="evidence at protein level"/>
<sequence>MNKSLVAVGVIVALGVVWTGGAWYTGKKIETHLEDMVAQANAQLKLTAPESNLEVSYQNYHRGVFSSQLQLLVKPIAGKENPWIKSGQSVIFNESVDHGPFPLAQLKKLNLIPSMASIQTTLVNNEVSKPLFDMAKGETPFEINSRIGYSGDSSSDISLKPLNYEQKDEKVAFSGGEFQLNADRDGKAISLSGEAQSGRIDAVNEYNQKVQLTFNNLKTDGSSTLASFGERVGNQKLSLEKMTISVEGKELALLEGMEISGKSDLVNDGKTINSQLDYSLNSLKVQNQDLGSGKLTLKVGQIDGEAWHQFSQQYNAQTQALLAQPEIANNPELYQEKVTEAFFSALPLMLKGDPVITIAPLSWKNSQGESALNLSLFLKDPATTKEAPQTLAQEVDRSVKSLDAKLTIPVDMATEFMTQVAKLEGYQEDQAKKLAKQQVEGASAMGQMFRLTTLQDNTITTSLQYANGQITLNGQKMSLEDFVGMFAMPALNVPAVPAIPQQ</sequence>
<feature type="signal peptide" evidence="1">
    <location>
        <begin position="1"/>
        <end position="19"/>
    </location>
</feature>
<feature type="chain" id="PRO_0000042627" description="Protein YdgA">
    <location>
        <begin position="20"/>
        <end position="502"/>
    </location>
</feature>
<feature type="sequence conflict" description="In Ref. 1." evidence="3" ref="1">
    <original>GKAISLSGEAQSG</original>
    <variation>AKPSPFPGRRKVV</variation>
    <location>
        <begin position="186"/>
        <end position="198"/>
    </location>
</feature>
<feature type="sequence conflict" description="In Ref. 1; AAA68926." evidence="3" ref="1">
    <original>LA</original>
    <variation>SR</variation>
    <location>
        <begin position="322"/>
        <end position="323"/>
    </location>
</feature>
<dbReference type="EMBL" id="M14641">
    <property type="protein sequence ID" value="AAA68926.1"/>
    <property type="status" value="ALT_FRAME"/>
    <property type="molecule type" value="Genomic_DNA"/>
</dbReference>
<dbReference type="EMBL" id="U00096">
    <property type="protein sequence ID" value="AAC74686.1"/>
    <property type="molecule type" value="Genomic_DNA"/>
</dbReference>
<dbReference type="EMBL" id="AP009048">
    <property type="protein sequence ID" value="BAA15362.1"/>
    <property type="molecule type" value="Genomic_DNA"/>
</dbReference>
<dbReference type="PIR" id="H64917">
    <property type="entry name" value="H64917"/>
</dbReference>
<dbReference type="RefSeq" id="NP_416131.1">
    <property type="nucleotide sequence ID" value="NC_000913.3"/>
</dbReference>
<dbReference type="RefSeq" id="WP_001043339.1">
    <property type="nucleotide sequence ID" value="NZ_SSZK01000001.1"/>
</dbReference>
<dbReference type="BioGRID" id="4260256">
    <property type="interactions" value="125"/>
</dbReference>
<dbReference type="DIP" id="DIP-11709N"/>
<dbReference type="FunCoup" id="P77804">
    <property type="interactions" value="89"/>
</dbReference>
<dbReference type="IntAct" id="P77804">
    <property type="interactions" value="11"/>
</dbReference>
<dbReference type="STRING" id="511145.b1614"/>
<dbReference type="jPOST" id="P77804"/>
<dbReference type="PaxDb" id="511145-b1614"/>
<dbReference type="EnsemblBacteria" id="AAC74686">
    <property type="protein sequence ID" value="AAC74686"/>
    <property type="gene ID" value="b1614"/>
</dbReference>
<dbReference type="GeneID" id="946172"/>
<dbReference type="KEGG" id="ecj:JW1606"/>
<dbReference type="KEGG" id="eco:b1614"/>
<dbReference type="KEGG" id="ecoc:C3026_09285"/>
<dbReference type="PATRIC" id="fig|511145.12.peg.1685"/>
<dbReference type="EchoBASE" id="EB2351"/>
<dbReference type="eggNOG" id="COG5339">
    <property type="taxonomic scope" value="Bacteria"/>
</dbReference>
<dbReference type="HOGENOM" id="CLU_029683_2_0_6"/>
<dbReference type="InParanoid" id="P77804"/>
<dbReference type="OMA" id="QYANGQV"/>
<dbReference type="OrthoDB" id="5444681at2"/>
<dbReference type="PhylomeDB" id="P77804"/>
<dbReference type="BioCyc" id="EcoCyc:G6865-MONOMER"/>
<dbReference type="PRO" id="PR:P77804"/>
<dbReference type="Proteomes" id="UP000000625">
    <property type="component" value="Chromosome"/>
</dbReference>
<dbReference type="GO" id="GO:0005886">
    <property type="term" value="C:plasma membrane"/>
    <property type="evidence" value="ECO:0007669"/>
    <property type="project" value="UniProtKB-SubCell"/>
</dbReference>
<dbReference type="GO" id="GO:0042802">
    <property type="term" value="F:identical protein binding"/>
    <property type="evidence" value="ECO:0000353"/>
    <property type="project" value="IntAct"/>
</dbReference>
<dbReference type="GO" id="GO:0042803">
    <property type="term" value="F:protein homodimerization activity"/>
    <property type="evidence" value="ECO:0000314"/>
    <property type="project" value="EcoCyc"/>
</dbReference>
<dbReference type="GO" id="GO:0071978">
    <property type="term" value="P:bacterial-type flagellum-dependent swarming motility"/>
    <property type="evidence" value="ECO:0000315"/>
    <property type="project" value="EcoCyc"/>
</dbReference>
<dbReference type="InterPro" id="IPR010352">
    <property type="entry name" value="DUF945"/>
</dbReference>
<dbReference type="Pfam" id="PF06097">
    <property type="entry name" value="DUF945"/>
    <property type="match status" value="1"/>
</dbReference>
<reference key="1">
    <citation type="submission" date="1994-10" db="EMBL/GenBank/DDBJ databases">
        <title>The gus genes of Escherichia coli.</title>
        <authorList>
            <person name="Liang W.J."/>
            <person name="Wilson K.J."/>
            <person name="Jefferson R.A."/>
        </authorList>
    </citation>
    <scope>NUCLEOTIDE SEQUENCE [GENOMIC DNA]</scope>
    <source>
        <strain>K12</strain>
    </source>
</reference>
<reference key="2">
    <citation type="journal article" date="1996" name="DNA Res.">
        <title>A 570-kb DNA sequence of the Escherichia coli K-12 genome corresponding to the 28.0-40.1 min region on the linkage map.</title>
        <authorList>
            <person name="Aiba H."/>
            <person name="Baba T."/>
            <person name="Fujita K."/>
            <person name="Hayashi K."/>
            <person name="Inada T."/>
            <person name="Isono K."/>
            <person name="Itoh T."/>
            <person name="Kasai H."/>
            <person name="Kashimoto K."/>
            <person name="Kimura S."/>
            <person name="Kitakawa M."/>
            <person name="Kitagawa M."/>
            <person name="Makino K."/>
            <person name="Miki T."/>
            <person name="Mizobuchi K."/>
            <person name="Mori H."/>
            <person name="Mori T."/>
            <person name="Motomura K."/>
            <person name="Nakade S."/>
            <person name="Nakamura Y."/>
            <person name="Nashimoto H."/>
            <person name="Nishio Y."/>
            <person name="Oshima T."/>
            <person name="Saito N."/>
            <person name="Sampei G."/>
            <person name="Seki Y."/>
            <person name="Sivasundaram S."/>
            <person name="Tagami H."/>
            <person name="Takeda J."/>
            <person name="Takemoto K."/>
            <person name="Takeuchi Y."/>
            <person name="Wada C."/>
            <person name="Yamamoto Y."/>
            <person name="Horiuchi T."/>
        </authorList>
    </citation>
    <scope>NUCLEOTIDE SEQUENCE [LARGE SCALE GENOMIC DNA]</scope>
    <source>
        <strain>K12 / W3110 / ATCC 27325 / DSM 5911</strain>
    </source>
</reference>
<reference key="3">
    <citation type="journal article" date="1997" name="Science">
        <title>The complete genome sequence of Escherichia coli K-12.</title>
        <authorList>
            <person name="Blattner F.R."/>
            <person name="Plunkett G. III"/>
            <person name="Bloch C.A."/>
            <person name="Perna N.T."/>
            <person name="Burland V."/>
            <person name="Riley M."/>
            <person name="Collado-Vides J."/>
            <person name="Glasner J.D."/>
            <person name="Rode C.K."/>
            <person name="Mayhew G.F."/>
            <person name="Gregor J."/>
            <person name="Davis N.W."/>
            <person name="Kirkpatrick H.A."/>
            <person name="Goeden M.A."/>
            <person name="Rose D.J."/>
            <person name="Mau B."/>
            <person name="Shao Y."/>
        </authorList>
    </citation>
    <scope>NUCLEOTIDE SEQUENCE [LARGE SCALE GENOMIC DNA]</scope>
    <source>
        <strain>K12 / MG1655 / ATCC 47076</strain>
    </source>
</reference>
<reference key="4">
    <citation type="journal article" date="2006" name="Mol. Syst. Biol.">
        <title>Highly accurate genome sequences of Escherichia coli K-12 strains MG1655 and W3110.</title>
        <authorList>
            <person name="Hayashi K."/>
            <person name="Morooka N."/>
            <person name="Yamamoto Y."/>
            <person name="Fujita K."/>
            <person name="Isono K."/>
            <person name="Choi S."/>
            <person name="Ohtsubo E."/>
            <person name="Baba T."/>
            <person name="Wanner B.L."/>
            <person name="Mori H."/>
            <person name="Horiuchi T."/>
        </authorList>
    </citation>
    <scope>NUCLEOTIDE SEQUENCE [LARGE SCALE GENOMIC DNA]</scope>
    <source>
        <strain>K12 / W3110 / ATCC 27325 / DSM 5911</strain>
    </source>
</reference>
<reference key="5">
    <citation type="journal article" date="2005" name="J. Biol. Chem.">
        <title>Protein complexes of the Escherichia coli cell envelope.</title>
        <authorList>
            <person name="Stenberg F."/>
            <person name="Chovanec P."/>
            <person name="Maslen S.L."/>
            <person name="Robinson C.V."/>
            <person name="Ilag L."/>
            <person name="von Heijne G."/>
            <person name="Daley D.O."/>
        </authorList>
    </citation>
    <scope>IDENTIFICATION BY MASS SPECTROMETRY</scope>
    <scope>SUBUNIT</scope>
    <scope>SUBCELLULAR LOCATION</scope>
    <source>
        <strain>BL21-DE3</strain>
    </source>
</reference>
<accession>P77804</accession>
<accession>Q47707</accession>
<organism>
    <name type="scientific">Escherichia coli (strain K12)</name>
    <dbReference type="NCBI Taxonomy" id="83333"/>
    <lineage>
        <taxon>Bacteria</taxon>
        <taxon>Pseudomonadati</taxon>
        <taxon>Pseudomonadota</taxon>
        <taxon>Gammaproteobacteria</taxon>
        <taxon>Enterobacterales</taxon>
        <taxon>Enterobacteriaceae</taxon>
        <taxon>Escherichia</taxon>
    </lineage>
</organism>
<name>YDGA_ECOLI</name>
<comment type="subunit">
    <text evidence="2">Homodimer.</text>
</comment>
<comment type="interaction">
    <interactant intactId="EBI-552466">
        <id>P77804</id>
    </interactant>
    <interactant intactId="EBI-552466">
        <id>P77804</id>
        <label>ydgA</label>
    </interactant>
    <organismsDiffer>false</organismsDiffer>
    <experiments>2</experiments>
</comment>
<comment type="subcellular location">
    <subcellularLocation>
        <location evidence="2">Cell inner membrane</location>
        <topology evidence="2">Peripheral membrane protein</topology>
        <orientation evidence="2">Periplasmic side</orientation>
    </subcellularLocation>
    <text>Has been isolated in association with the inner membrane, suggesting it may be tethered to the membrane.</text>
</comment>
<comment type="similarity">
    <text evidence="3">To E.coli YihF and H.influenzae HI_1236.</text>
</comment>
<comment type="sequence caution" evidence="3">
    <conflict type="frameshift">
        <sequence resource="EMBL-CDS" id="AAA68926"/>
    </conflict>
</comment>